<reference key="1">
    <citation type="journal article" date="1998" name="Virus Genes">
        <title>Nucleotide and predicted amino acid sequences of all genes encoded by the 3' genomic portion (9.5 kb) of respiratory bovine coronaviruses and comparisons among respiratory and enteric coronaviruses.</title>
        <authorList>
            <person name="Chouljenko V.N."/>
            <person name="Kousoulas K.G."/>
            <person name="Lin X.Q."/>
            <person name="Storz J."/>
        </authorList>
    </citation>
    <scope>NUCLEOTIDE SEQUENCE [GENOMIC RNA]</scope>
</reference>
<proteinExistence type="inferred from homology"/>
<sequence length="45" mass="4965">MPMATTIDGTDYTNIMPITVFTTVYLGVFIGIDTSTTGFTCFSRY</sequence>
<name>NS48_CVBOK</name>
<organism>
    <name type="scientific">Bovine coronavirus (strain OK-0514)</name>
    <name type="common">BCoV</name>
    <name type="synonym">BCV</name>
    <dbReference type="NCBI Taxonomy" id="231432"/>
    <lineage>
        <taxon>Viruses</taxon>
        <taxon>Riboviria</taxon>
        <taxon>Orthornavirae</taxon>
        <taxon>Pisuviricota</taxon>
        <taxon>Pisoniviricetes</taxon>
        <taxon>Nidovirales</taxon>
        <taxon>Cornidovirineae</taxon>
        <taxon>Coronaviridae</taxon>
        <taxon>Orthocoronavirinae</taxon>
        <taxon>Betacoronavirus</taxon>
        <taxon>Embecovirus</taxon>
        <taxon>Betacoronavirus 1</taxon>
    </lineage>
</organism>
<feature type="chain" id="PRO_0000283962" description="Non-structural protein of 4.8 kDa">
    <location>
        <begin position="1"/>
        <end position="45"/>
    </location>
</feature>
<organismHost>
    <name type="scientific">Bos taurus</name>
    <name type="common">Bovine</name>
    <dbReference type="NCBI Taxonomy" id="9913"/>
</organismHost>
<protein>
    <recommendedName>
        <fullName>Non-structural protein of 4.8 kDa</fullName>
        <shortName>ns4.8</shortName>
    </recommendedName>
    <alternativeName>
        <fullName>4.8 kDa accessory protein</fullName>
    </alternativeName>
</protein>
<dbReference type="EMBL" id="AF058944">
    <property type="protein sequence ID" value="AAF25521.1"/>
    <property type="molecule type" value="Genomic_RNA"/>
</dbReference>
<dbReference type="InterPro" id="IPR005603">
    <property type="entry name" value="Corona_NS4"/>
</dbReference>
<dbReference type="Pfam" id="PF03905">
    <property type="entry name" value="Corona_NS4"/>
    <property type="match status" value="1"/>
</dbReference>
<comment type="similarity">
    <text evidence="1">Belongs to the coronaviruses ns4/ns4.8 protein family.</text>
</comment>
<evidence type="ECO:0000305" key="1"/>
<gene>
    <name type="ORF">4b</name>
</gene>
<accession>P0C2R8</accession>
<accession>Q9QAQ6</accession>